<comment type="function">
    <text evidence="1">DNA-dependent RNA polymerase catalyzes the transcription of DNA into RNA using the four ribonucleoside triphosphates as substrates.</text>
</comment>
<comment type="catalytic activity">
    <reaction evidence="1">
        <text>RNA(n) + a ribonucleoside 5'-triphosphate = RNA(n+1) + diphosphate</text>
        <dbReference type="Rhea" id="RHEA:21248"/>
        <dbReference type="Rhea" id="RHEA-COMP:14527"/>
        <dbReference type="Rhea" id="RHEA-COMP:17342"/>
        <dbReference type="ChEBI" id="CHEBI:33019"/>
        <dbReference type="ChEBI" id="CHEBI:61557"/>
        <dbReference type="ChEBI" id="CHEBI:140395"/>
        <dbReference type="EC" id="2.7.7.6"/>
    </reaction>
</comment>
<comment type="subunit">
    <text evidence="1">Homodimer. The RNAP catalytic core consists of 2 alpha, 1 beta, 1 beta' and 1 omega subunit. When a sigma factor is associated with the core the holoenzyme is formed, which can initiate transcription.</text>
</comment>
<comment type="domain">
    <text evidence="1">The N-terminal domain is essential for RNAP assembly and basal transcription, whereas the C-terminal domain is involved in interaction with transcriptional regulators and with upstream promoter elements.</text>
</comment>
<comment type="similarity">
    <text evidence="1">Belongs to the RNA polymerase alpha chain family.</text>
</comment>
<name>RPOA_STRP1</name>
<proteinExistence type="inferred from homology"/>
<gene>
    <name evidence="1" type="primary">rpoA</name>
    <name type="ordered locus">SPy_0080</name>
    <name type="ordered locus">M5005_Spy0070</name>
</gene>
<keyword id="KW-0240">DNA-directed RNA polymerase</keyword>
<keyword id="KW-0548">Nucleotidyltransferase</keyword>
<keyword id="KW-1185">Reference proteome</keyword>
<keyword id="KW-0804">Transcription</keyword>
<keyword id="KW-0808">Transferase</keyword>
<dbReference type="EC" id="2.7.7.6" evidence="1"/>
<dbReference type="EMBL" id="AE004092">
    <property type="protein sequence ID" value="AAK33208.1"/>
    <property type="molecule type" value="Genomic_DNA"/>
</dbReference>
<dbReference type="EMBL" id="CP000017">
    <property type="protein sequence ID" value="AAZ50689.1"/>
    <property type="molecule type" value="Genomic_DNA"/>
</dbReference>
<dbReference type="RefSeq" id="NP_268486.1">
    <property type="nucleotide sequence ID" value="NC_002737.2"/>
</dbReference>
<dbReference type="SMR" id="P66710"/>
<dbReference type="PaxDb" id="1314-HKU360_00103"/>
<dbReference type="KEGG" id="spy:SPy_0080"/>
<dbReference type="KEGG" id="spz:M5005_Spy0070"/>
<dbReference type="PATRIC" id="fig|160490.10.peg.70"/>
<dbReference type="HOGENOM" id="CLU_053084_0_1_9"/>
<dbReference type="OMA" id="PIKNVKY"/>
<dbReference type="Proteomes" id="UP000000750">
    <property type="component" value="Chromosome"/>
</dbReference>
<dbReference type="GO" id="GO:0005737">
    <property type="term" value="C:cytoplasm"/>
    <property type="evidence" value="ECO:0007669"/>
    <property type="project" value="UniProtKB-ARBA"/>
</dbReference>
<dbReference type="GO" id="GO:0000428">
    <property type="term" value="C:DNA-directed RNA polymerase complex"/>
    <property type="evidence" value="ECO:0007669"/>
    <property type="project" value="UniProtKB-KW"/>
</dbReference>
<dbReference type="GO" id="GO:0003677">
    <property type="term" value="F:DNA binding"/>
    <property type="evidence" value="ECO:0007669"/>
    <property type="project" value="UniProtKB-UniRule"/>
</dbReference>
<dbReference type="GO" id="GO:0003899">
    <property type="term" value="F:DNA-directed RNA polymerase activity"/>
    <property type="evidence" value="ECO:0007669"/>
    <property type="project" value="UniProtKB-UniRule"/>
</dbReference>
<dbReference type="GO" id="GO:0046983">
    <property type="term" value="F:protein dimerization activity"/>
    <property type="evidence" value="ECO:0007669"/>
    <property type="project" value="InterPro"/>
</dbReference>
<dbReference type="GO" id="GO:0006351">
    <property type="term" value="P:DNA-templated transcription"/>
    <property type="evidence" value="ECO:0007669"/>
    <property type="project" value="UniProtKB-UniRule"/>
</dbReference>
<dbReference type="CDD" id="cd06928">
    <property type="entry name" value="RNAP_alpha_NTD"/>
    <property type="match status" value="1"/>
</dbReference>
<dbReference type="FunFam" id="1.10.150.20:FF:000001">
    <property type="entry name" value="DNA-directed RNA polymerase subunit alpha"/>
    <property type="match status" value="1"/>
</dbReference>
<dbReference type="FunFam" id="2.170.120.12:FF:000001">
    <property type="entry name" value="DNA-directed RNA polymerase subunit alpha"/>
    <property type="match status" value="1"/>
</dbReference>
<dbReference type="Gene3D" id="1.10.150.20">
    <property type="entry name" value="5' to 3' exonuclease, C-terminal subdomain"/>
    <property type="match status" value="1"/>
</dbReference>
<dbReference type="Gene3D" id="2.170.120.12">
    <property type="entry name" value="DNA-directed RNA polymerase, insert domain"/>
    <property type="match status" value="1"/>
</dbReference>
<dbReference type="Gene3D" id="3.30.1360.10">
    <property type="entry name" value="RNA polymerase, RBP11-like subunit"/>
    <property type="match status" value="1"/>
</dbReference>
<dbReference type="HAMAP" id="MF_00059">
    <property type="entry name" value="RNApol_bact_RpoA"/>
    <property type="match status" value="1"/>
</dbReference>
<dbReference type="InterPro" id="IPR011262">
    <property type="entry name" value="DNA-dir_RNA_pol_insert"/>
</dbReference>
<dbReference type="InterPro" id="IPR011263">
    <property type="entry name" value="DNA-dir_RNA_pol_RpoA/D/Rpb3"/>
</dbReference>
<dbReference type="InterPro" id="IPR011773">
    <property type="entry name" value="DNA-dir_RpoA"/>
</dbReference>
<dbReference type="InterPro" id="IPR036603">
    <property type="entry name" value="RBP11-like"/>
</dbReference>
<dbReference type="InterPro" id="IPR011260">
    <property type="entry name" value="RNAP_asu_C"/>
</dbReference>
<dbReference type="InterPro" id="IPR036643">
    <property type="entry name" value="RNApol_insert_sf"/>
</dbReference>
<dbReference type="NCBIfam" id="NF003513">
    <property type="entry name" value="PRK05182.1-2"/>
    <property type="match status" value="1"/>
</dbReference>
<dbReference type="NCBIfam" id="NF003515">
    <property type="entry name" value="PRK05182.2-1"/>
    <property type="match status" value="1"/>
</dbReference>
<dbReference type="NCBIfam" id="NF003518">
    <property type="entry name" value="PRK05182.2-4"/>
    <property type="match status" value="1"/>
</dbReference>
<dbReference type="NCBIfam" id="NF003519">
    <property type="entry name" value="PRK05182.2-5"/>
    <property type="match status" value="1"/>
</dbReference>
<dbReference type="NCBIfam" id="TIGR02027">
    <property type="entry name" value="rpoA"/>
    <property type="match status" value="1"/>
</dbReference>
<dbReference type="Pfam" id="PF01000">
    <property type="entry name" value="RNA_pol_A_bac"/>
    <property type="match status" value="1"/>
</dbReference>
<dbReference type="Pfam" id="PF03118">
    <property type="entry name" value="RNA_pol_A_CTD"/>
    <property type="match status" value="1"/>
</dbReference>
<dbReference type="Pfam" id="PF01193">
    <property type="entry name" value="RNA_pol_L"/>
    <property type="match status" value="1"/>
</dbReference>
<dbReference type="SMART" id="SM00662">
    <property type="entry name" value="RPOLD"/>
    <property type="match status" value="1"/>
</dbReference>
<dbReference type="SUPFAM" id="SSF47789">
    <property type="entry name" value="C-terminal domain of RNA polymerase alpha subunit"/>
    <property type="match status" value="1"/>
</dbReference>
<dbReference type="SUPFAM" id="SSF56553">
    <property type="entry name" value="Insert subdomain of RNA polymerase alpha subunit"/>
    <property type="match status" value="1"/>
</dbReference>
<dbReference type="SUPFAM" id="SSF55257">
    <property type="entry name" value="RBP11-like subunits of RNA polymerase"/>
    <property type="match status" value="1"/>
</dbReference>
<feature type="chain" id="PRO_0000175396" description="DNA-directed RNA polymerase subunit alpha">
    <location>
        <begin position="1"/>
        <end position="312"/>
    </location>
</feature>
<feature type="region of interest" description="Alpha N-terminal domain (alpha-NTD)" evidence="1">
    <location>
        <begin position="1"/>
        <end position="226"/>
    </location>
</feature>
<feature type="region of interest" description="Alpha C-terminal domain (alpha-CTD)" evidence="1">
    <location>
        <begin position="243"/>
        <end position="312"/>
    </location>
</feature>
<evidence type="ECO:0000255" key="1">
    <source>
        <dbReference type="HAMAP-Rule" id="MF_00059"/>
    </source>
</evidence>
<accession>P66710</accession>
<accession>Q491M9</accession>
<accession>Q9A1U9</accession>
<protein>
    <recommendedName>
        <fullName evidence="1">DNA-directed RNA polymerase subunit alpha</fullName>
        <shortName evidence="1">RNAP subunit alpha</shortName>
        <ecNumber evidence="1">2.7.7.6</ecNumber>
    </recommendedName>
    <alternativeName>
        <fullName evidence="1">RNA polymerase subunit alpha</fullName>
    </alternativeName>
    <alternativeName>
        <fullName evidence="1">Transcriptase subunit alpha</fullName>
    </alternativeName>
</protein>
<reference key="1">
    <citation type="journal article" date="2001" name="Proc. Natl. Acad. Sci. U.S.A.">
        <title>Complete genome sequence of an M1 strain of Streptococcus pyogenes.</title>
        <authorList>
            <person name="Ferretti J.J."/>
            <person name="McShan W.M."/>
            <person name="Ajdic D.J."/>
            <person name="Savic D.J."/>
            <person name="Savic G."/>
            <person name="Lyon K."/>
            <person name="Primeaux C."/>
            <person name="Sezate S."/>
            <person name="Suvorov A.N."/>
            <person name="Kenton S."/>
            <person name="Lai H.S."/>
            <person name="Lin S.P."/>
            <person name="Qian Y."/>
            <person name="Jia H.G."/>
            <person name="Najar F.Z."/>
            <person name="Ren Q."/>
            <person name="Zhu H."/>
            <person name="Song L."/>
            <person name="White J."/>
            <person name="Yuan X."/>
            <person name="Clifton S.W."/>
            <person name="Roe B.A."/>
            <person name="McLaughlin R.E."/>
        </authorList>
    </citation>
    <scope>NUCLEOTIDE SEQUENCE [LARGE SCALE GENOMIC DNA]</scope>
    <source>
        <strain>ATCC 700294 / SF370 / Serotype M1</strain>
    </source>
</reference>
<reference key="2">
    <citation type="journal article" date="2005" name="J. Infect. Dis.">
        <title>Evolutionary origin and emergence of a highly successful clone of serotype M1 group A Streptococcus involved multiple horizontal gene transfer events.</title>
        <authorList>
            <person name="Sumby P."/>
            <person name="Porcella S.F."/>
            <person name="Madrigal A.G."/>
            <person name="Barbian K.D."/>
            <person name="Virtaneva K."/>
            <person name="Ricklefs S.M."/>
            <person name="Sturdevant D.E."/>
            <person name="Graham M.R."/>
            <person name="Vuopio-Varkila J."/>
            <person name="Hoe N.P."/>
            <person name="Musser J.M."/>
        </authorList>
    </citation>
    <scope>NUCLEOTIDE SEQUENCE [LARGE SCALE GENOMIC DNA]</scope>
    <source>
        <strain>ATCC BAA-947 / MGAS5005 / Serotype M1</strain>
    </source>
</reference>
<sequence length="312" mass="34530">MIEFEKPIITKIDENKDYGRFVIEPLERGYGTTLGNSLRRVLLSSLPGAAVTSIKIDGVLHEFDTIPGVREDVMQIILNVKGLAVKSYVEDEKIIELEVEGPAEVTAGDILTDSDIELVNPDHYLFTIAEGHSLRATMTVAKKRGYVPAEGNKKDDAPVGTLAVDSIYTPVKKVNYQVEPARVGSNDGFDKLTIEIMTNGTIIPEDALGLSARVLIEHLNLFTDLTEVAKATEVMKETEKVNDEKVLDRTIEELDLSVRSYNCLKRAGINTVFDLTEKSEPEMMKVRNLGRKSLEEVKVKLADLGLGLKNDK</sequence>
<organism>
    <name type="scientific">Streptococcus pyogenes serotype M1</name>
    <dbReference type="NCBI Taxonomy" id="301447"/>
    <lineage>
        <taxon>Bacteria</taxon>
        <taxon>Bacillati</taxon>
        <taxon>Bacillota</taxon>
        <taxon>Bacilli</taxon>
        <taxon>Lactobacillales</taxon>
        <taxon>Streptococcaceae</taxon>
        <taxon>Streptococcus</taxon>
    </lineage>
</organism>